<reference key="1">
    <citation type="journal article" date="2004" name="Mol. Plant Microbe Interact.">
        <title>The genome sequence of the Gram-positive sugarcane pathogen Leifsonia xyli subsp. xyli.</title>
        <authorList>
            <person name="Monteiro-Vitorello C.B."/>
            <person name="Camargo L.E.A."/>
            <person name="Van Sluys M.A."/>
            <person name="Kitajima J.P."/>
            <person name="Truffi D."/>
            <person name="do Amaral A.M."/>
            <person name="Harakava R."/>
            <person name="de Oliveira J.C.F."/>
            <person name="Wood D."/>
            <person name="de Oliveira M.C."/>
            <person name="Miyaki C.Y."/>
            <person name="Takita M.A."/>
            <person name="da Silva A.C.R."/>
            <person name="Furlan L.R."/>
            <person name="Carraro D.M."/>
            <person name="Camarotte G."/>
            <person name="Almeida N.F. Jr."/>
            <person name="Carrer H."/>
            <person name="Coutinho L.L."/>
            <person name="El-Dorry H.A."/>
            <person name="Ferro M.I.T."/>
            <person name="Gagliardi P.R."/>
            <person name="Giglioti E."/>
            <person name="Goldman M.H.S."/>
            <person name="Goldman G.H."/>
            <person name="Kimura E.T."/>
            <person name="Ferro E.S."/>
            <person name="Kuramae E.E."/>
            <person name="Lemos E.G.M."/>
            <person name="Lemos M.V.F."/>
            <person name="Mauro S.M.Z."/>
            <person name="Machado M.A."/>
            <person name="Marino C.L."/>
            <person name="Menck C.F."/>
            <person name="Nunes L.R."/>
            <person name="Oliveira R.C."/>
            <person name="Pereira G.G."/>
            <person name="Siqueira W."/>
            <person name="de Souza A.A."/>
            <person name="Tsai S.M."/>
            <person name="Zanca A.S."/>
            <person name="Simpson A.J.G."/>
            <person name="Brumbley S.M."/>
            <person name="Setubal J.C."/>
        </authorList>
    </citation>
    <scope>NUCLEOTIDE SEQUENCE [LARGE SCALE GENOMIC DNA]</scope>
    <source>
        <strain>CTCB07</strain>
    </source>
</reference>
<dbReference type="EC" id="3.2.2.23" evidence="2"/>
<dbReference type="EC" id="4.2.99.18" evidence="2"/>
<dbReference type="EMBL" id="AE016822">
    <property type="protein sequence ID" value="AAT88852.1"/>
    <property type="molecule type" value="Genomic_DNA"/>
</dbReference>
<dbReference type="RefSeq" id="WP_011185849.1">
    <property type="nucleotide sequence ID" value="NC_006087.1"/>
</dbReference>
<dbReference type="SMR" id="Q6AFJ3"/>
<dbReference type="STRING" id="281090.Lxx09800"/>
<dbReference type="KEGG" id="lxx:Lxx09800"/>
<dbReference type="eggNOG" id="COG0266">
    <property type="taxonomic scope" value="Bacteria"/>
</dbReference>
<dbReference type="HOGENOM" id="CLU_038423_1_2_11"/>
<dbReference type="Proteomes" id="UP000001306">
    <property type="component" value="Chromosome"/>
</dbReference>
<dbReference type="GO" id="GO:0034039">
    <property type="term" value="F:8-oxo-7,8-dihydroguanine DNA N-glycosylase activity"/>
    <property type="evidence" value="ECO:0007669"/>
    <property type="project" value="TreeGrafter"/>
</dbReference>
<dbReference type="GO" id="GO:0140078">
    <property type="term" value="F:class I DNA-(apurinic or apyrimidinic site) endonuclease activity"/>
    <property type="evidence" value="ECO:0007669"/>
    <property type="project" value="UniProtKB-EC"/>
</dbReference>
<dbReference type="GO" id="GO:0003684">
    <property type="term" value="F:damaged DNA binding"/>
    <property type="evidence" value="ECO:0007669"/>
    <property type="project" value="InterPro"/>
</dbReference>
<dbReference type="GO" id="GO:0008270">
    <property type="term" value="F:zinc ion binding"/>
    <property type="evidence" value="ECO:0007669"/>
    <property type="project" value="UniProtKB-UniRule"/>
</dbReference>
<dbReference type="GO" id="GO:0006284">
    <property type="term" value="P:base-excision repair"/>
    <property type="evidence" value="ECO:0007669"/>
    <property type="project" value="InterPro"/>
</dbReference>
<dbReference type="CDD" id="cd08966">
    <property type="entry name" value="EcFpg-like_N"/>
    <property type="match status" value="1"/>
</dbReference>
<dbReference type="FunFam" id="1.10.8.50:FF:000003">
    <property type="entry name" value="Formamidopyrimidine-DNA glycosylase"/>
    <property type="match status" value="1"/>
</dbReference>
<dbReference type="Gene3D" id="1.10.8.50">
    <property type="match status" value="1"/>
</dbReference>
<dbReference type="Gene3D" id="3.20.190.10">
    <property type="entry name" value="MutM-like, N-terminal"/>
    <property type="match status" value="1"/>
</dbReference>
<dbReference type="HAMAP" id="MF_00103">
    <property type="entry name" value="Fapy_DNA_glycosyl"/>
    <property type="match status" value="1"/>
</dbReference>
<dbReference type="InterPro" id="IPR015886">
    <property type="entry name" value="DNA_glyclase/AP_lyase_DNA-bd"/>
</dbReference>
<dbReference type="InterPro" id="IPR015887">
    <property type="entry name" value="DNA_glyclase_Znf_dom_DNA_BS"/>
</dbReference>
<dbReference type="InterPro" id="IPR020629">
    <property type="entry name" value="Formamido-pyr_DNA_Glyclase"/>
</dbReference>
<dbReference type="InterPro" id="IPR012319">
    <property type="entry name" value="FPG_cat"/>
</dbReference>
<dbReference type="InterPro" id="IPR035937">
    <property type="entry name" value="MutM-like_N-ter"/>
</dbReference>
<dbReference type="InterPro" id="IPR010979">
    <property type="entry name" value="Ribosomal_uS13-like_H2TH"/>
</dbReference>
<dbReference type="InterPro" id="IPR000214">
    <property type="entry name" value="Znf_DNA_glyclase/AP_lyase"/>
</dbReference>
<dbReference type="InterPro" id="IPR010663">
    <property type="entry name" value="Znf_FPG/IleRS"/>
</dbReference>
<dbReference type="NCBIfam" id="TIGR00577">
    <property type="entry name" value="fpg"/>
    <property type="match status" value="1"/>
</dbReference>
<dbReference type="NCBIfam" id="NF002211">
    <property type="entry name" value="PRK01103.1"/>
    <property type="match status" value="1"/>
</dbReference>
<dbReference type="PANTHER" id="PTHR22993">
    <property type="entry name" value="FORMAMIDOPYRIMIDINE-DNA GLYCOSYLASE"/>
    <property type="match status" value="1"/>
</dbReference>
<dbReference type="PANTHER" id="PTHR22993:SF9">
    <property type="entry name" value="FORMAMIDOPYRIMIDINE-DNA GLYCOSYLASE"/>
    <property type="match status" value="1"/>
</dbReference>
<dbReference type="Pfam" id="PF01149">
    <property type="entry name" value="Fapy_DNA_glyco"/>
    <property type="match status" value="1"/>
</dbReference>
<dbReference type="Pfam" id="PF06831">
    <property type="entry name" value="H2TH"/>
    <property type="match status" value="1"/>
</dbReference>
<dbReference type="Pfam" id="PF06827">
    <property type="entry name" value="zf-FPG_IleRS"/>
    <property type="match status" value="1"/>
</dbReference>
<dbReference type="SMART" id="SM00898">
    <property type="entry name" value="Fapy_DNA_glyco"/>
    <property type="match status" value="1"/>
</dbReference>
<dbReference type="SMART" id="SM01232">
    <property type="entry name" value="H2TH"/>
    <property type="match status" value="1"/>
</dbReference>
<dbReference type="SUPFAM" id="SSF57716">
    <property type="entry name" value="Glucocorticoid receptor-like (DNA-binding domain)"/>
    <property type="match status" value="1"/>
</dbReference>
<dbReference type="SUPFAM" id="SSF81624">
    <property type="entry name" value="N-terminal domain of MutM-like DNA repair proteins"/>
    <property type="match status" value="1"/>
</dbReference>
<dbReference type="SUPFAM" id="SSF46946">
    <property type="entry name" value="S13-like H2TH domain"/>
    <property type="match status" value="1"/>
</dbReference>
<dbReference type="PROSITE" id="PS51068">
    <property type="entry name" value="FPG_CAT"/>
    <property type="match status" value="1"/>
</dbReference>
<dbReference type="PROSITE" id="PS01242">
    <property type="entry name" value="ZF_FPG_1"/>
    <property type="match status" value="1"/>
</dbReference>
<dbReference type="PROSITE" id="PS51066">
    <property type="entry name" value="ZF_FPG_2"/>
    <property type="match status" value="1"/>
</dbReference>
<organism>
    <name type="scientific">Leifsonia xyli subsp. xyli (strain CTCB07)</name>
    <dbReference type="NCBI Taxonomy" id="281090"/>
    <lineage>
        <taxon>Bacteria</taxon>
        <taxon>Bacillati</taxon>
        <taxon>Actinomycetota</taxon>
        <taxon>Actinomycetes</taxon>
        <taxon>Micrococcales</taxon>
        <taxon>Microbacteriaceae</taxon>
        <taxon>Leifsonia</taxon>
    </lineage>
</organism>
<accession>Q6AFJ3</accession>
<comment type="function">
    <text evidence="2">Involved in base excision repair of DNA damaged by oxidation or by mutagenic agents. Acts as a DNA glycosylase that recognizes and removes damaged bases. Has a preference for oxidized purines, such as 7,8-dihydro-8-oxoguanine (8-oxoG). Has AP (apurinic/apyrimidinic) lyase activity and introduces nicks in the DNA strand. Cleaves the DNA backbone by beta-delta elimination to generate a single-strand break at the site of the removed base with both 3'- and 5'-phosphates.</text>
</comment>
<comment type="catalytic activity">
    <reaction evidence="2">
        <text>Hydrolysis of DNA containing ring-opened 7-methylguanine residues, releasing 2,6-diamino-4-hydroxy-5-(N-methyl)formamidopyrimidine.</text>
        <dbReference type="EC" id="3.2.2.23"/>
    </reaction>
</comment>
<comment type="catalytic activity">
    <reaction evidence="2">
        <text>2'-deoxyribonucleotide-(2'-deoxyribose 5'-phosphate)-2'-deoxyribonucleotide-DNA = a 3'-end 2'-deoxyribonucleotide-(2,3-dehydro-2,3-deoxyribose 5'-phosphate)-DNA + a 5'-end 5'-phospho-2'-deoxyribonucleoside-DNA + H(+)</text>
        <dbReference type="Rhea" id="RHEA:66592"/>
        <dbReference type="Rhea" id="RHEA-COMP:13180"/>
        <dbReference type="Rhea" id="RHEA-COMP:16897"/>
        <dbReference type="Rhea" id="RHEA-COMP:17067"/>
        <dbReference type="ChEBI" id="CHEBI:15378"/>
        <dbReference type="ChEBI" id="CHEBI:136412"/>
        <dbReference type="ChEBI" id="CHEBI:157695"/>
        <dbReference type="ChEBI" id="CHEBI:167181"/>
        <dbReference type="EC" id="4.2.99.18"/>
    </reaction>
</comment>
<comment type="cofactor">
    <cofactor evidence="2">
        <name>Zn(2+)</name>
        <dbReference type="ChEBI" id="CHEBI:29105"/>
    </cofactor>
    <text evidence="2">Binds 1 zinc ion per subunit.</text>
</comment>
<comment type="subunit">
    <text evidence="2">Monomer.</text>
</comment>
<comment type="similarity">
    <text evidence="2">Belongs to the FPG family.</text>
</comment>
<proteinExistence type="inferred from homology"/>
<protein>
    <recommendedName>
        <fullName evidence="2">Formamidopyrimidine-DNA glycosylase</fullName>
        <shortName evidence="2">Fapy-DNA glycosylase</shortName>
        <ecNumber evidence="2">3.2.2.23</ecNumber>
    </recommendedName>
    <alternativeName>
        <fullName evidence="2">DNA-(apurinic or apyrimidinic site) lyase MutM</fullName>
        <shortName evidence="2">AP lyase MutM</shortName>
        <ecNumber evidence="2">4.2.99.18</ecNumber>
    </alternativeName>
</protein>
<keyword id="KW-0227">DNA damage</keyword>
<keyword id="KW-0234">DNA repair</keyword>
<keyword id="KW-0238">DNA-binding</keyword>
<keyword id="KW-0326">Glycosidase</keyword>
<keyword id="KW-0378">Hydrolase</keyword>
<keyword id="KW-0456">Lyase</keyword>
<keyword id="KW-0479">Metal-binding</keyword>
<keyword id="KW-0511">Multifunctional enzyme</keyword>
<keyword id="KW-1185">Reference proteome</keyword>
<keyword id="KW-0862">Zinc</keyword>
<keyword id="KW-0863">Zinc-finger</keyword>
<sequence length="297" mass="32476">MPELPEVEVVRAGLAPAVTGATILGVEVFELRSLKRHDPLAGSFESLLTGRSMQTPARRGKFLWIPLDSSPRSAIVAHLGMSGQILLRDPGTVENGLLRIRLYIEHPEHGELWVHFVDQRLFGSMAVDALVPTVDGAPAGLGTDEALLPAQVSHIARDPLDPVFDDAAFAAVLARRRSGIKRVLLDQTLISGIGNIYADESLWAARIHYDHPATALSRPRVRTLLAELRRVLGRALAEGGTSFDAQYVNVNGASGYFSRSLHVYGRQGQPCDRCGTAIVRESFMNRGSHFCPRCQRM</sequence>
<feature type="initiator methionine" description="Removed" evidence="1">
    <location>
        <position position="1"/>
    </location>
</feature>
<feature type="chain" id="PRO_0000170832" description="Formamidopyrimidine-DNA glycosylase">
    <location>
        <begin position="2"/>
        <end position="297"/>
    </location>
</feature>
<feature type="zinc finger region" description="FPG-type" evidence="2">
    <location>
        <begin position="262"/>
        <end position="296"/>
    </location>
</feature>
<feature type="active site" description="Schiff-base intermediate with DNA" evidence="2">
    <location>
        <position position="2"/>
    </location>
</feature>
<feature type="active site" description="Proton donor" evidence="2">
    <location>
        <position position="3"/>
    </location>
</feature>
<feature type="active site" description="Proton donor; for beta-elimination activity" evidence="2">
    <location>
        <position position="61"/>
    </location>
</feature>
<feature type="active site" description="Proton donor; for delta-elimination activity" evidence="2">
    <location>
        <position position="286"/>
    </location>
</feature>
<feature type="binding site" evidence="2">
    <location>
        <position position="120"/>
    </location>
    <ligand>
        <name>DNA</name>
        <dbReference type="ChEBI" id="CHEBI:16991"/>
    </ligand>
</feature>
<feature type="binding site" evidence="2">
    <location>
        <position position="176"/>
    </location>
    <ligand>
        <name>DNA</name>
        <dbReference type="ChEBI" id="CHEBI:16991"/>
    </ligand>
</feature>
<gene>
    <name evidence="2" type="primary">mutM</name>
    <name evidence="2" type="synonym">fpg</name>
    <name type="ordered locus">Lxx09800</name>
</gene>
<evidence type="ECO:0000250" key="1"/>
<evidence type="ECO:0000255" key="2">
    <source>
        <dbReference type="HAMAP-Rule" id="MF_00103"/>
    </source>
</evidence>
<name>FPG_LEIXX</name>